<accession>Q1RAH0</accession>
<gene>
    <name evidence="1" type="primary">msrQ</name>
    <name type="ordered locus">UTI89_C2171</name>
</gene>
<dbReference type="EMBL" id="CP000243">
    <property type="protein sequence ID" value="ABE07644.1"/>
    <property type="molecule type" value="Genomic_DNA"/>
</dbReference>
<dbReference type="RefSeq" id="WP_001240073.1">
    <property type="nucleotide sequence ID" value="NZ_CP064825.1"/>
</dbReference>
<dbReference type="SMR" id="Q1RAH0"/>
<dbReference type="KEGG" id="eci:UTI89_C2171"/>
<dbReference type="HOGENOM" id="CLU_080662_0_1_6"/>
<dbReference type="Proteomes" id="UP000001952">
    <property type="component" value="Chromosome"/>
</dbReference>
<dbReference type="GO" id="GO:0005886">
    <property type="term" value="C:plasma membrane"/>
    <property type="evidence" value="ECO:0007669"/>
    <property type="project" value="UniProtKB-SubCell"/>
</dbReference>
<dbReference type="GO" id="GO:0009055">
    <property type="term" value="F:electron transfer activity"/>
    <property type="evidence" value="ECO:0007669"/>
    <property type="project" value="UniProtKB-UniRule"/>
</dbReference>
<dbReference type="GO" id="GO:0010181">
    <property type="term" value="F:FMN binding"/>
    <property type="evidence" value="ECO:0007669"/>
    <property type="project" value="UniProtKB-UniRule"/>
</dbReference>
<dbReference type="GO" id="GO:0020037">
    <property type="term" value="F:heme binding"/>
    <property type="evidence" value="ECO:0007669"/>
    <property type="project" value="UniProtKB-UniRule"/>
</dbReference>
<dbReference type="GO" id="GO:0046872">
    <property type="term" value="F:metal ion binding"/>
    <property type="evidence" value="ECO:0007669"/>
    <property type="project" value="UniProtKB-KW"/>
</dbReference>
<dbReference type="GO" id="GO:0016679">
    <property type="term" value="F:oxidoreductase activity, acting on diphenols and related substances as donors"/>
    <property type="evidence" value="ECO:0007669"/>
    <property type="project" value="TreeGrafter"/>
</dbReference>
<dbReference type="GO" id="GO:0030091">
    <property type="term" value="P:protein repair"/>
    <property type="evidence" value="ECO:0007669"/>
    <property type="project" value="UniProtKB-UniRule"/>
</dbReference>
<dbReference type="HAMAP" id="MF_01207">
    <property type="entry name" value="MsrQ"/>
    <property type="match status" value="1"/>
</dbReference>
<dbReference type="InterPro" id="IPR013130">
    <property type="entry name" value="Fe3_Rdtase_TM_dom"/>
</dbReference>
<dbReference type="InterPro" id="IPR022837">
    <property type="entry name" value="MsrQ-like"/>
</dbReference>
<dbReference type="NCBIfam" id="NF003830">
    <property type="entry name" value="PRK05419.1-1"/>
    <property type="match status" value="1"/>
</dbReference>
<dbReference type="NCBIfam" id="NF003831">
    <property type="entry name" value="PRK05419.1-2"/>
    <property type="match status" value="1"/>
</dbReference>
<dbReference type="NCBIfam" id="NF003832">
    <property type="entry name" value="PRK05419.1-4"/>
    <property type="match status" value="1"/>
</dbReference>
<dbReference type="PANTHER" id="PTHR36964">
    <property type="entry name" value="PROTEIN-METHIONINE-SULFOXIDE REDUCTASE HEME-BINDING SUBUNIT MSRQ"/>
    <property type="match status" value="1"/>
</dbReference>
<dbReference type="PANTHER" id="PTHR36964:SF1">
    <property type="entry name" value="PROTEIN-METHIONINE-SULFOXIDE REDUCTASE HEME-BINDING SUBUNIT MSRQ"/>
    <property type="match status" value="1"/>
</dbReference>
<dbReference type="Pfam" id="PF01794">
    <property type="entry name" value="Ferric_reduct"/>
    <property type="match status" value="1"/>
</dbReference>
<proteinExistence type="inferred from homology"/>
<evidence type="ECO:0000255" key="1">
    <source>
        <dbReference type="HAMAP-Rule" id="MF_01207"/>
    </source>
</evidence>
<organism>
    <name type="scientific">Escherichia coli (strain UTI89 / UPEC)</name>
    <dbReference type="NCBI Taxonomy" id="364106"/>
    <lineage>
        <taxon>Bacteria</taxon>
        <taxon>Pseudomonadati</taxon>
        <taxon>Pseudomonadota</taxon>
        <taxon>Gammaproteobacteria</taxon>
        <taxon>Enterobacterales</taxon>
        <taxon>Enterobacteriaceae</taxon>
        <taxon>Escherichia</taxon>
    </lineage>
</organism>
<comment type="function">
    <text evidence="1">Part of the MsrPQ system that repairs oxidized periplasmic proteins containing methionine sulfoxide residues (Met-O), using respiratory chain electrons. Thus protects these proteins from oxidative-stress damage caused by reactive species of oxygen and chlorine generated by the host defense mechanisms. MsrPQ is essential for the maintenance of envelope integrity under bleach stress, rescuing a wide series of structurally unrelated periplasmic proteins from methionine oxidation, including the primary periplasmic chaperone SurA and the lipoprotein Pal. MsrQ provides electrons for reduction to the reductase catalytic subunit MsrP, using the quinone pool of the respiratory chain.</text>
</comment>
<comment type="cofactor">
    <cofactor evidence="1">
        <name>FMN</name>
        <dbReference type="ChEBI" id="CHEBI:58210"/>
    </cofactor>
    <text evidence="1">Binds 1 FMN per subunit.</text>
</comment>
<comment type="cofactor">
    <cofactor evidence="1">
        <name>heme b</name>
        <dbReference type="ChEBI" id="CHEBI:60344"/>
    </cofactor>
    <text evidence="1">Binds 1 heme b (iron(II)-protoporphyrin IX) group per subunit.</text>
</comment>
<comment type="subunit">
    <text evidence="1">Heterodimer of a catalytic subunit (MsrP) and a heme-binding subunit (MsrQ).</text>
</comment>
<comment type="subcellular location">
    <subcellularLocation>
        <location evidence="1">Cell inner membrane</location>
        <topology evidence="1">Multi-pass membrane protein</topology>
    </subcellularLocation>
</comment>
<comment type="similarity">
    <text evidence="1">Belongs to the MsrQ family.</text>
</comment>
<protein>
    <recommendedName>
        <fullName evidence="1">Protein-methionine-sulfoxide reductase heme-binding subunit MsrQ</fullName>
    </recommendedName>
    <alternativeName>
        <fullName evidence="1">Flavocytochrome MsrQ</fullName>
    </alternativeName>
</protein>
<name>MSRQ_ECOUT</name>
<keyword id="KW-0997">Cell inner membrane</keyword>
<keyword id="KW-1003">Cell membrane</keyword>
<keyword id="KW-0249">Electron transport</keyword>
<keyword id="KW-0285">Flavoprotein</keyword>
<keyword id="KW-0288">FMN</keyword>
<keyword id="KW-0349">Heme</keyword>
<keyword id="KW-0408">Iron</keyword>
<keyword id="KW-0472">Membrane</keyword>
<keyword id="KW-0479">Metal-binding</keyword>
<keyword id="KW-0812">Transmembrane</keyword>
<keyword id="KW-1133">Transmembrane helix</keyword>
<keyword id="KW-0813">Transport</keyword>
<sequence>MRLTAKQVTWLKVCLHLAGLLPFLWLAWAINHGGLGADPVKDIQHFTGRTALKFLLATLLITPLARYAKQPLLIRTRRLLGLWCFAWATLHLTSYALLELGVNNLALLGKELITRPYLTLGIISWVILLALAFTSTQAMQRKLGKHWQQLHNFVYLVAILAPIHYLWSVKIISPQPLIYAGLAVLLLALRYKKLLSLFNQLRKQVHNKLSL</sequence>
<feature type="chain" id="PRO_1000066173" description="Protein-methionine-sulfoxide reductase heme-binding subunit MsrQ">
    <location>
        <begin position="1"/>
        <end position="211"/>
    </location>
</feature>
<feature type="transmembrane region" description="Helical" evidence="1">
    <location>
        <begin position="10"/>
        <end position="30"/>
    </location>
</feature>
<feature type="transmembrane region" description="Helical" evidence="1">
    <location>
        <begin position="82"/>
        <end position="102"/>
    </location>
</feature>
<feature type="transmembrane region" description="Helical" evidence="1">
    <location>
        <begin position="116"/>
        <end position="136"/>
    </location>
</feature>
<feature type="transmembrane region" description="Helical" evidence="1">
    <location>
        <begin position="153"/>
        <end position="173"/>
    </location>
</feature>
<feature type="transmembrane region" description="Helical" evidence="1">
    <location>
        <begin position="178"/>
        <end position="198"/>
    </location>
</feature>
<reference key="1">
    <citation type="journal article" date="2006" name="Proc. Natl. Acad. Sci. U.S.A.">
        <title>Identification of genes subject to positive selection in uropathogenic strains of Escherichia coli: a comparative genomics approach.</title>
        <authorList>
            <person name="Chen S.L."/>
            <person name="Hung C.-S."/>
            <person name="Xu J."/>
            <person name="Reigstad C.S."/>
            <person name="Magrini V."/>
            <person name="Sabo A."/>
            <person name="Blasiar D."/>
            <person name="Bieri T."/>
            <person name="Meyer R.R."/>
            <person name="Ozersky P."/>
            <person name="Armstrong J.R."/>
            <person name="Fulton R.S."/>
            <person name="Latreille J.P."/>
            <person name="Spieth J."/>
            <person name="Hooton T.M."/>
            <person name="Mardis E.R."/>
            <person name="Hultgren S.J."/>
            <person name="Gordon J.I."/>
        </authorList>
    </citation>
    <scope>NUCLEOTIDE SEQUENCE [LARGE SCALE GENOMIC DNA]</scope>
    <source>
        <strain>UTI89 / UPEC</strain>
    </source>
</reference>